<reference key="1">
    <citation type="journal article" date="2006" name="Proc. Natl. Acad. Sci. U.S.A.">
        <title>The complete genome sequence of Lactobacillus bulgaricus reveals extensive and ongoing reductive evolution.</title>
        <authorList>
            <person name="van de Guchte M."/>
            <person name="Penaud S."/>
            <person name="Grimaldi C."/>
            <person name="Barbe V."/>
            <person name="Bryson K."/>
            <person name="Nicolas P."/>
            <person name="Robert C."/>
            <person name="Oztas S."/>
            <person name="Mangenot S."/>
            <person name="Couloux A."/>
            <person name="Loux V."/>
            <person name="Dervyn R."/>
            <person name="Bossy R."/>
            <person name="Bolotin A."/>
            <person name="Batto J.-M."/>
            <person name="Walunas T."/>
            <person name="Gibrat J.-F."/>
            <person name="Bessieres P."/>
            <person name="Weissenbach J."/>
            <person name="Ehrlich S.D."/>
            <person name="Maguin E."/>
        </authorList>
    </citation>
    <scope>NUCLEOTIDE SEQUENCE [LARGE SCALE GENOMIC DNA]</scope>
    <source>
        <strain>ATCC 11842 / DSM 20081 / BCRC 10696 / JCM 1002 / NBRC 13953 / NCIMB 11778 / NCTC 12712 / WDCM 00102 / Lb 14</strain>
    </source>
</reference>
<keyword id="KW-0413">Isomerase</keyword>
<keyword id="KW-1185">Reference proteome</keyword>
<protein>
    <recommendedName>
        <fullName evidence="1">Ribose-5-phosphate isomerase A</fullName>
        <ecNumber evidence="1">5.3.1.6</ecNumber>
    </recommendedName>
    <alternativeName>
        <fullName evidence="1">Phosphoriboisomerase A</fullName>
        <shortName evidence="1">PRI</shortName>
    </alternativeName>
</protein>
<evidence type="ECO:0000255" key="1">
    <source>
        <dbReference type="HAMAP-Rule" id="MF_00170"/>
    </source>
</evidence>
<name>RPIA_LACDA</name>
<proteinExistence type="inferred from homology"/>
<accession>Q1GBA8</accession>
<comment type="function">
    <text evidence="1">Catalyzes the reversible conversion of ribose-5-phosphate to ribulose 5-phosphate.</text>
</comment>
<comment type="catalytic activity">
    <reaction evidence="1">
        <text>aldehydo-D-ribose 5-phosphate = D-ribulose 5-phosphate</text>
        <dbReference type="Rhea" id="RHEA:14657"/>
        <dbReference type="ChEBI" id="CHEBI:58121"/>
        <dbReference type="ChEBI" id="CHEBI:58273"/>
        <dbReference type="EC" id="5.3.1.6"/>
    </reaction>
</comment>
<comment type="pathway">
    <text evidence="1">Carbohydrate degradation; pentose phosphate pathway; D-ribose 5-phosphate from D-ribulose 5-phosphate (non-oxidative stage): step 1/1.</text>
</comment>
<comment type="subunit">
    <text evidence="1">Homodimer.</text>
</comment>
<comment type="similarity">
    <text evidence="1">Belongs to the ribose 5-phosphate isomerase family.</text>
</comment>
<gene>
    <name evidence="1" type="primary">rpiA</name>
    <name type="ordered locus">Ldb0531</name>
</gene>
<organism>
    <name type="scientific">Lactobacillus delbrueckii subsp. bulgaricus (strain ATCC 11842 / DSM 20081 / BCRC 10696 / JCM 1002 / NBRC 13953 / NCIMB 11778 / NCTC 12712 / WDCM 00102 / Lb 14)</name>
    <dbReference type="NCBI Taxonomy" id="390333"/>
    <lineage>
        <taxon>Bacteria</taxon>
        <taxon>Bacillati</taxon>
        <taxon>Bacillota</taxon>
        <taxon>Bacilli</taxon>
        <taxon>Lactobacillales</taxon>
        <taxon>Lactobacillaceae</taxon>
        <taxon>Lactobacillus</taxon>
    </lineage>
</organism>
<dbReference type="EC" id="5.3.1.6" evidence="1"/>
<dbReference type="EMBL" id="CR954253">
    <property type="protein sequence ID" value="CAI97362.1"/>
    <property type="molecule type" value="Genomic_DNA"/>
</dbReference>
<dbReference type="RefSeq" id="WP_003618787.1">
    <property type="nucleotide sequence ID" value="NZ_JQAV01000001.1"/>
</dbReference>
<dbReference type="SMR" id="Q1GBA8"/>
<dbReference type="STRING" id="390333.Ldb0531"/>
<dbReference type="KEGG" id="ldb:Ldb0531"/>
<dbReference type="PATRIC" id="fig|390333.13.peg.266"/>
<dbReference type="eggNOG" id="COG0120">
    <property type="taxonomic scope" value="Bacteria"/>
</dbReference>
<dbReference type="HOGENOM" id="CLU_056590_1_0_9"/>
<dbReference type="BioCyc" id="LDEL390333:LDB_RS02275-MONOMER"/>
<dbReference type="UniPathway" id="UPA00115">
    <property type="reaction ID" value="UER00412"/>
</dbReference>
<dbReference type="Proteomes" id="UP000001259">
    <property type="component" value="Chromosome"/>
</dbReference>
<dbReference type="GO" id="GO:0005829">
    <property type="term" value="C:cytosol"/>
    <property type="evidence" value="ECO:0007669"/>
    <property type="project" value="TreeGrafter"/>
</dbReference>
<dbReference type="GO" id="GO:0004751">
    <property type="term" value="F:ribose-5-phosphate isomerase activity"/>
    <property type="evidence" value="ECO:0007669"/>
    <property type="project" value="UniProtKB-UniRule"/>
</dbReference>
<dbReference type="GO" id="GO:0006014">
    <property type="term" value="P:D-ribose metabolic process"/>
    <property type="evidence" value="ECO:0007669"/>
    <property type="project" value="TreeGrafter"/>
</dbReference>
<dbReference type="GO" id="GO:0009052">
    <property type="term" value="P:pentose-phosphate shunt, non-oxidative branch"/>
    <property type="evidence" value="ECO:0007669"/>
    <property type="project" value="UniProtKB-UniRule"/>
</dbReference>
<dbReference type="CDD" id="cd01398">
    <property type="entry name" value="RPI_A"/>
    <property type="match status" value="1"/>
</dbReference>
<dbReference type="FunFam" id="3.40.50.1360:FF:000001">
    <property type="entry name" value="Ribose-5-phosphate isomerase A"/>
    <property type="match status" value="1"/>
</dbReference>
<dbReference type="Gene3D" id="3.30.70.260">
    <property type="match status" value="1"/>
</dbReference>
<dbReference type="Gene3D" id="3.40.50.1360">
    <property type="match status" value="1"/>
</dbReference>
<dbReference type="HAMAP" id="MF_00170">
    <property type="entry name" value="Rib_5P_isom_A"/>
    <property type="match status" value="1"/>
</dbReference>
<dbReference type="InterPro" id="IPR037171">
    <property type="entry name" value="NagB/RpiA_transferase-like"/>
</dbReference>
<dbReference type="InterPro" id="IPR020672">
    <property type="entry name" value="Ribose5P_isomerase_typA_subgr"/>
</dbReference>
<dbReference type="InterPro" id="IPR004788">
    <property type="entry name" value="Ribose5P_isomerase_type_A"/>
</dbReference>
<dbReference type="NCBIfam" id="NF001924">
    <property type="entry name" value="PRK00702.1"/>
    <property type="match status" value="1"/>
</dbReference>
<dbReference type="NCBIfam" id="TIGR00021">
    <property type="entry name" value="rpiA"/>
    <property type="match status" value="1"/>
</dbReference>
<dbReference type="PANTHER" id="PTHR11934">
    <property type="entry name" value="RIBOSE-5-PHOSPHATE ISOMERASE"/>
    <property type="match status" value="1"/>
</dbReference>
<dbReference type="PANTHER" id="PTHR11934:SF0">
    <property type="entry name" value="RIBOSE-5-PHOSPHATE ISOMERASE"/>
    <property type="match status" value="1"/>
</dbReference>
<dbReference type="Pfam" id="PF06026">
    <property type="entry name" value="Rib_5-P_isom_A"/>
    <property type="match status" value="1"/>
</dbReference>
<dbReference type="SUPFAM" id="SSF75445">
    <property type="entry name" value="D-ribose-5-phosphate isomerase (RpiA), lid domain"/>
    <property type="match status" value="1"/>
</dbReference>
<dbReference type="SUPFAM" id="SSF100950">
    <property type="entry name" value="NagB/RpiA/CoA transferase-like"/>
    <property type="match status" value="1"/>
</dbReference>
<feature type="chain" id="PRO_1000016939" description="Ribose-5-phosphate isomerase A">
    <location>
        <begin position="1"/>
        <end position="230"/>
    </location>
</feature>
<feature type="active site" description="Proton acceptor" evidence="1">
    <location>
        <position position="109"/>
    </location>
</feature>
<feature type="binding site" evidence="1">
    <location>
        <begin position="31"/>
        <end position="34"/>
    </location>
    <ligand>
        <name>substrate</name>
    </ligand>
</feature>
<feature type="binding site" evidence="1">
    <location>
        <begin position="87"/>
        <end position="90"/>
    </location>
    <ligand>
        <name>substrate</name>
    </ligand>
</feature>
<feature type="binding site" evidence="1">
    <location>
        <begin position="100"/>
        <end position="103"/>
    </location>
    <ligand>
        <name>substrate</name>
    </ligand>
</feature>
<feature type="binding site" evidence="1">
    <location>
        <position position="127"/>
    </location>
    <ligand>
        <name>substrate</name>
    </ligand>
</feature>
<sequence>MDQAKQDELKKAAAKKAAALVEDGMVLGVGTGSTVKFFIDELGKKKAAGLTLKAVVTTSSRSQKQLEGYGFTVSPLSEVDQVDLTVDGADRVDKQLNGIKGGGAALTLEKNVAVNSKKNVWIVDESKVVDHLSGFALPVEVLPISCMQVEKRLADEGLKPEFRLTEDGQRLKTHYGNYILDLKLDRIPVPSGLADYLDHTVGVVEHGLFLNICDQVIIARDNGEIEVRSR</sequence>